<gene>
    <name type="primary">Cst12</name>
</gene>
<organism>
    <name type="scientific">Mus musculus</name>
    <name type="common">Mouse</name>
    <dbReference type="NCBI Taxonomy" id="10090"/>
    <lineage>
        <taxon>Eukaryota</taxon>
        <taxon>Metazoa</taxon>
        <taxon>Chordata</taxon>
        <taxon>Craniata</taxon>
        <taxon>Vertebrata</taxon>
        <taxon>Euteleostomi</taxon>
        <taxon>Mammalia</taxon>
        <taxon>Eutheria</taxon>
        <taxon>Euarchontoglires</taxon>
        <taxon>Glires</taxon>
        <taxon>Rodentia</taxon>
        <taxon>Myomorpha</taxon>
        <taxon>Muroidea</taxon>
        <taxon>Muridae</taxon>
        <taxon>Murinae</taxon>
        <taxon>Mus</taxon>
        <taxon>Mus</taxon>
    </lineage>
</organism>
<comment type="function">
    <text evidence="3">May play a specialized role in spermatogenesis.</text>
</comment>
<comment type="subcellular location">
    <subcellularLocation>
        <location evidence="4">Secreted</location>
    </subcellularLocation>
</comment>
<comment type="tissue specificity">
    <text evidence="3">Located at the very proximal caput epididymis (at protein level). Expressed in epididymis, Sertoli cells and testis. Also found to be weakly expressed in ovary and prostate.</text>
</comment>
<comment type="similarity">
    <text evidence="4">Belongs to the cystatin family.</text>
</comment>
<protein>
    <recommendedName>
        <fullName>Cystatin-12</fullName>
    </recommendedName>
    <alternativeName>
        <fullName>Cystatin TE-1</fullName>
    </alternativeName>
</protein>
<reference key="1">
    <citation type="journal article" date="2002" name="Biol. Reprod.">
        <title>Identification and characterization of testis- and epididymis-specific genes: cystatin SC and cystatin TE-1.</title>
        <authorList>
            <person name="Li Y."/>
            <person name="Friel P.J."/>
            <person name="Robinson M.O."/>
            <person name="McLean D.J."/>
            <person name="Griswold M.D."/>
        </authorList>
    </citation>
    <scope>NUCLEOTIDE SEQUENCE [MRNA]</scope>
    <scope>FUNCTION</scope>
    <scope>TISSUE SPECIFICITY</scope>
    <source>
        <strain>C57BL/6J</strain>
        <tissue>Testis</tissue>
    </source>
</reference>
<reference key="2">
    <citation type="journal article" date="2005" name="Science">
        <title>The transcriptional landscape of the mammalian genome.</title>
        <authorList>
            <person name="Carninci P."/>
            <person name="Kasukawa T."/>
            <person name="Katayama S."/>
            <person name="Gough J."/>
            <person name="Frith M.C."/>
            <person name="Maeda N."/>
            <person name="Oyama R."/>
            <person name="Ravasi T."/>
            <person name="Lenhard B."/>
            <person name="Wells C."/>
            <person name="Kodzius R."/>
            <person name="Shimokawa K."/>
            <person name="Bajic V.B."/>
            <person name="Brenner S.E."/>
            <person name="Batalov S."/>
            <person name="Forrest A.R."/>
            <person name="Zavolan M."/>
            <person name="Davis M.J."/>
            <person name="Wilming L.G."/>
            <person name="Aidinis V."/>
            <person name="Allen J.E."/>
            <person name="Ambesi-Impiombato A."/>
            <person name="Apweiler R."/>
            <person name="Aturaliya R.N."/>
            <person name="Bailey T.L."/>
            <person name="Bansal M."/>
            <person name="Baxter L."/>
            <person name="Beisel K.W."/>
            <person name="Bersano T."/>
            <person name="Bono H."/>
            <person name="Chalk A.M."/>
            <person name="Chiu K.P."/>
            <person name="Choudhary V."/>
            <person name="Christoffels A."/>
            <person name="Clutterbuck D.R."/>
            <person name="Crowe M.L."/>
            <person name="Dalla E."/>
            <person name="Dalrymple B.P."/>
            <person name="de Bono B."/>
            <person name="Della Gatta G."/>
            <person name="di Bernardo D."/>
            <person name="Down T."/>
            <person name="Engstrom P."/>
            <person name="Fagiolini M."/>
            <person name="Faulkner G."/>
            <person name="Fletcher C.F."/>
            <person name="Fukushima T."/>
            <person name="Furuno M."/>
            <person name="Futaki S."/>
            <person name="Gariboldi M."/>
            <person name="Georgii-Hemming P."/>
            <person name="Gingeras T.R."/>
            <person name="Gojobori T."/>
            <person name="Green R.E."/>
            <person name="Gustincich S."/>
            <person name="Harbers M."/>
            <person name="Hayashi Y."/>
            <person name="Hensch T.K."/>
            <person name="Hirokawa N."/>
            <person name="Hill D."/>
            <person name="Huminiecki L."/>
            <person name="Iacono M."/>
            <person name="Ikeo K."/>
            <person name="Iwama A."/>
            <person name="Ishikawa T."/>
            <person name="Jakt M."/>
            <person name="Kanapin A."/>
            <person name="Katoh M."/>
            <person name="Kawasawa Y."/>
            <person name="Kelso J."/>
            <person name="Kitamura H."/>
            <person name="Kitano H."/>
            <person name="Kollias G."/>
            <person name="Krishnan S.P."/>
            <person name="Kruger A."/>
            <person name="Kummerfeld S.K."/>
            <person name="Kurochkin I.V."/>
            <person name="Lareau L.F."/>
            <person name="Lazarevic D."/>
            <person name="Lipovich L."/>
            <person name="Liu J."/>
            <person name="Liuni S."/>
            <person name="McWilliam S."/>
            <person name="Madan Babu M."/>
            <person name="Madera M."/>
            <person name="Marchionni L."/>
            <person name="Matsuda H."/>
            <person name="Matsuzawa S."/>
            <person name="Miki H."/>
            <person name="Mignone F."/>
            <person name="Miyake S."/>
            <person name="Morris K."/>
            <person name="Mottagui-Tabar S."/>
            <person name="Mulder N."/>
            <person name="Nakano N."/>
            <person name="Nakauchi H."/>
            <person name="Ng P."/>
            <person name="Nilsson R."/>
            <person name="Nishiguchi S."/>
            <person name="Nishikawa S."/>
            <person name="Nori F."/>
            <person name="Ohara O."/>
            <person name="Okazaki Y."/>
            <person name="Orlando V."/>
            <person name="Pang K.C."/>
            <person name="Pavan W.J."/>
            <person name="Pavesi G."/>
            <person name="Pesole G."/>
            <person name="Petrovsky N."/>
            <person name="Piazza S."/>
            <person name="Reed J."/>
            <person name="Reid J.F."/>
            <person name="Ring B.Z."/>
            <person name="Ringwald M."/>
            <person name="Rost B."/>
            <person name="Ruan Y."/>
            <person name="Salzberg S.L."/>
            <person name="Sandelin A."/>
            <person name="Schneider C."/>
            <person name="Schoenbach C."/>
            <person name="Sekiguchi K."/>
            <person name="Semple C.A."/>
            <person name="Seno S."/>
            <person name="Sessa L."/>
            <person name="Sheng Y."/>
            <person name="Shibata Y."/>
            <person name="Shimada H."/>
            <person name="Shimada K."/>
            <person name="Silva D."/>
            <person name="Sinclair B."/>
            <person name="Sperling S."/>
            <person name="Stupka E."/>
            <person name="Sugiura K."/>
            <person name="Sultana R."/>
            <person name="Takenaka Y."/>
            <person name="Taki K."/>
            <person name="Tammoja K."/>
            <person name="Tan S.L."/>
            <person name="Tang S."/>
            <person name="Taylor M.S."/>
            <person name="Tegner J."/>
            <person name="Teichmann S.A."/>
            <person name="Ueda H.R."/>
            <person name="van Nimwegen E."/>
            <person name="Verardo R."/>
            <person name="Wei C.L."/>
            <person name="Yagi K."/>
            <person name="Yamanishi H."/>
            <person name="Zabarovsky E."/>
            <person name="Zhu S."/>
            <person name="Zimmer A."/>
            <person name="Hide W."/>
            <person name="Bult C."/>
            <person name="Grimmond S.M."/>
            <person name="Teasdale R.D."/>
            <person name="Liu E.T."/>
            <person name="Brusic V."/>
            <person name="Quackenbush J."/>
            <person name="Wahlestedt C."/>
            <person name="Mattick J.S."/>
            <person name="Hume D.A."/>
            <person name="Kai C."/>
            <person name="Sasaki D."/>
            <person name="Tomaru Y."/>
            <person name="Fukuda S."/>
            <person name="Kanamori-Katayama M."/>
            <person name="Suzuki M."/>
            <person name="Aoki J."/>
            <person name="Arakawa T."/>
            <person name="Iida J."/>
            <person name="Imamura K."/>
            <person name="Itoh M."/>
            <person name="Kato T."/>
            <person name="Kawaji H."/>
            <person name="Kawagashira N."/>
            <person name="Kawashima T."/>
            <person name="Kojima M."/>
            <person name="Kondo S."/>
            <person name="Konno H."/>
            <person name="Nakano K."/>
            <person name="Ninomiya N."/>
            <person name="Nishio T."/>
            <person name="Okada M."/>
            <person name="Plessy C."/>
            <person name="Shibata K."/>
            <person name="Shiraki T."/>
            <person name="Suzuki S."/>
            <person name="Tagami M."/>
            <person name="Waki K."/>
            <person name="Watahiki A."/>
            <person name="Okamura-Oho Y."/>
            <person name="Suzuki H."/>
            <person name="Kawai J."/>
            <person name="Hayashizaki Y."/>
        </authorList>
    </citation>
    <scope>NUCLEOTIDE SEQUENCE [LARGE SCALE MRNA]</scope>
    <source>
        <strain>C57BL/6J</strain>
        <tissue>Testis</tissue>
    </source>
</reference>
<reference key="3">
    <citation type="journal article" date="2009" name="PLoS Biol.">
        <title>Lineage-specific biology revealed by a finished genome assembly of the mouse.</title>
        <authorList>
            <person name="Church D.M."/>
            <person name="Goodstadt L."/>
            <person name="Hillier L.W."/>
            <person name="Zody M.C."/>
            <person name="Goldstein S."/>
            <person name="She X."/>
            <person name="Bult C.J."/>
            <person name="Agarwala R."/>
            <person name="Cherry J.L."/>
            <person name="DiCuccio M."/>
            <person name="Hlavina W."/>
            <person name="Kapustin Y."/>
            <person name="Meric P."/>
            <person name="Maglott D."/>
            <person name="Birtle Z."/>
            <person name="Marques A.C."/>
            <person name="Graves T."/>
            <person name="Zhou S."/>
            <person name="Teague B."/>
            <person name="Potamousis K."/>
            <person name="Churas C."/>
            <person name="Place M."/>
            <person name="Herschleb J."/>
            <person name="Runnheim R."/>
            <person name="Forrest D."/>
            <person name="Amos-Landgraf J."/>
            <person name="Schwartz D.C."/>
            <person name="Cheng Z."/>
            <person name="Lindblad-Toh K."/>
            <person name="Eichler E.E."/>
            <person name="Ponting C.P."/>
        </authorList>
    </citation>
    <scope>NUCLEOTIDE SEQUENCE [LARGE SCALE GENOMIC DNA]</scope>
    <source>
        <strain>C57BL/6J</strain>
    </source>
</reference>
<reference key="4">
    <citation type="journal article" date="2004" name="Genome Res.">
        <title>The status, quality, and expansion of the NIH full-length cDNA project: the Mammalian Gene Collection (MGC).</title>
        <authorList>
            <consortium name="The MGC Project Team"/>
        </authorList>
    </citation>
    <scope>NUCLEOTIDE SEQUENCE [LARGE SCALE MRNA]</scope>
</reference>
<reference key="5">
    <citation type="journal article" date="2010" name="Cell">
        <title>A tissue-specific atlas of mouse protein phosphorylation and expression.</title>
        <authorList>
            <person name="Huttlin E.L."/>
            <person name="Jedrychowski M.P."/>
            <person name="Elias J.E."/>
            <person name="Goswami T."/>
            <person name="Rad R."/>
            <person name="Beausoleil S.A."/>
            <person name="Villen J."/>
            <person name="Haas W."/>
            <person name="Sowa M.E."/>
            <person name="Gygi S.P."/>
        </authorList>
    </citation>
    <scope>IDENTIFICATION BY MASS SPECTROMETRY [LARGE SCALE ANALYSIS]</scope>
    <source>
        <tissue>Testis</tissue>
    </source>
</reference>
<evidence type="ECO:0000250" key="1"/>
<evidence type="ECO:0000255" key="2"/>
<evidence type="ECO:0000269" key="3">
    <source>
    </source>
</evidence>
<evidence type="ECO:0000305" key="4"/>
<proteinExistence type="evidence at protein level"/>
<feature type="signal peptide" evidence="2">
    <location>
        <begin position="1"/>
        <end position="21"/>
    </location>
</feature>
<feature type="chain" id="PRO_0000285791" description="Cystatin-12">
    <location>
        <begin position="22"/>
        <end position="128"/>
    </location>
</feature>
<feature type="glycosylation site" description="N-linked (GlcNAc...) asparagine" evidence="2">
    <location>
        <position position="122"/>
    </location>
</feature>
<feature type="disulfide bond" evidence="1">
    <location>
        <begin position="82"/>
        <end position="92"/>
    </location>
</feature>
<feature type="disulfide bond" evidence="1">
    <location>
        <begin position="105"/>
        <end position="125"/>
    </location>
</feature>
<dbReference type="EMBL" id="AF440737">
    <property type="protein sequence ID" value="AAL30843.1"/>
    <property type="molecule type" value="mRNA"/>
</dbReference>
<dbReference type="EMBL" id="AK005670">
    <property type="protein sequence ID" value="BAB24179.1"/>
    <property type="molecule type" value="mRNA"/>
</dbReference>
<dbReference type="EMBL" id="AL844519">
    <property type="status" value="NOT_ANNOTATED_CDS"/>
    <property type="molecule type" value="Genomic_DNA"/>
</dbReference>
<dbReference type="EMBL" id="BC119432">
    <property type="protein sequence ID" value="AAI19433.1"/>
    <property type="molecule type" value="mRNA"/>
</dbReference>
<dbReference type="CCDS" id="CCDS50737.2"/>
<dbReference type="RefSeq" id="NP_081330.2">
    <property type="nucleotide sequence ID" value="NM_027054.2"/>
</dbReference>
<dbReference type="SMR" id="Q9DAN8"/>
<dbReference type="FunCoup" id="Q9DAN8">
    <property type="interactions" value="11"/>
</dbReference>
<dbReference type="STRING" id="10090.ENSMUSP00000126008"/>
<dbReference type="MEROPS" id="I25.024"/>
<dbReference type="GlyCosmos" id="Q9DAN8">
    <property type="glycosylation" value="1 site, No reported glycans"/>
</dbReference>
<dbReference type="GlyGen" id="Q9DAN8">
    <property type="glycosylation" value="1 site"/>
</dbReference>
<dbReference type="iPTMnet" id="Q9DAN8"/>
<dbReference type="PhosphoSitePlus" id="Q9DAN8"/>
<dbReference type="PaxDb" id="10090-ENSMUSP00000126008"/>
<dbReference type="ProteomicsDB" id="284054"/>
<dbReference type="DNASU" id="69362"/>
<dbReference type="Ensembl" id="ENSMUST00000028932.4">
    <property type="protein sequence ID" value="ENSMUSP00000028932.4"/>
    <property type="gene ID" value="ENSMUSG00000027443.11"/>
</dbReference>
<dbReference type="GeneID" id="69362"/>
<dbReference type="KEGG" id="mmu:69362"/>
<dbReference type="AGR" id="MGI:1916612"/>
<dbReference type="CTD" id="69362"/>
<dbReference type="MGI" id="MGI:1916612">
    <property type="gene designation" value="Cst12"/>
</dbReference>
<dbReference type="VEuPathDB" id="HostDB:ENSMUSG00000027443"/>
<dbReference type="eggNOG" id="ENOG502TDK9">
    <property type="taxonomic scope" value="Eukaryota"/>
</dbReference>
<dbReference type="GeneTree" id="ENSGT00940000162636"/>
<dbReference type="HOGENOM" id="CLU_118168_3_2_1"/>
<dbReference type="InParanoid" id="Q9DAN8"/>
<dbReference type="OrthoDB" id="9829654at2759"/>
<dbReference type="PhylomeDB" id="Q9DAN8"/>
<dbReference type="BioGRID-ORCS" id="69362">
    <property type="hits" value="1 hit in 77 CRISPR screens"/>
</dbReference>
<dbReference type="ChiTaRS" id="Cst12">
    <property type="organism name" value="mouse"/>
</dbReference>
<dbReference type="PRO" id="PR:Q9DAN8"/>
<dbReference type="Proteomes" id="UP000000589">
    <property type="component" value="Chromosome 2"/>
</dbReference>
<dbReference type="RNAct" id="Q9DAN8">
    <property type="molecule type" value="protein"/>
</dbReference>
<dbReference type="Bgee" id="ENSMUSG00000027443">
    <property type="expression patterns" value="Expressed in seminiferous tubule of testis and 29 other cell types or tissues"/>
</dbReference>
<dbReference type="ExpressionAtlas" id="Q9DAN8">
    <property type="expression patterns" value="baseline and differential"/>
</dbReference>
<dbReference type="GO" id="GO:0005576">
    <property type="term" value="C:extracellular region"/>
    <property type="evidence" value="ECO:0007669"/>
    <property type="project" value="UniProtKB-SubCell"/>
</dbReference>
<dbReference type="GO" id="GO:0004869">
    <property type="term" value="F:cysteine-type endopeptidase inhibitor activity"/>
    <property type="evidence" value="ECO:0007669"/>
    <property type="project" value="UniProtKB-KW"/>
</dbReference>
<dbReference type="CDD" id="cd00042">
    <property type="entry name" value="CY"/>
    <property type="match status" value="1"/>
</dbReference>
<dbReference type="Gene3D" id="3.10.450.10">
    <property type="match status" value="1"/>
</dbReference>
<dbReference type="InterPro" id="IPR000010">
    <property type="entry name" value="Cystatin_dom"/>
</dbReference>
<dbReference type="InterPro" id="IPR046350">
    <property type="entry name" value="Cystatin_sf"/>
</dbReference>
<dbReference type="InterPro" id="IPR052333">
    <property type="entry name" value="Cystatin_spermatogenesis"/>
</dbReference>
<dbReference type="PANTHER" id="PTHR47393:SF1">
    <property type="entry name" value="CYSTATIN-12"/>
    <property type="match status" value="1"/>
</dbReference>
<dbReference type="PANTHER" id="PTHR47393">
    <property type="entry name" value="CYSTATIN-12-RELATED"/>
    <property type="match status" value="1"/>
</dbReference>
<dbReference type="Pfam" id="PF00031">
    <property type="entry name" value="Cystatin"/>
    <property type="match status" value="1"/>
</dbReference>
<dbReference type="SUPFAM" id="SSF54403">
    <property type="entry name" value="Cystatin/monellin"/>
    <property type="match status" value="1"/>
</dbReference>
<accession>Q9DAN8</accession>
<keyword id="KW-1015">Disulfide bond</keyword>
<keyword id="KW-0325">Glycoprotein</keyword>
<keyword id="KW-0646">Protease inhibitor</keyword>
<keyword id="KW-1185">Reference proteome</keyword>
<keyword id="KW-0964">Secreted</keyword>
<keyword id="KW-0732">Signal</keyword>
<keyword id="KW-0789">Thiol protease inhibitor</keyword>
<name>CST12_MOUSE</name>
<sequence length="128" mass="15036">MLWKSVLSVALIVLGIHDCSFKFLEIDKNEEEFAISVEHVVFHFNENQDDDFAYKFLRVRRSLRQKYTLKYLVDLEMGRTLCGKYDEDIDNCPLQEGPGERKVRCTYIVETEAWVTKFTILNSTCVQT</sequence>